<accession>P0DMJ1</accession>
<accession>A0A023WB37</accession>
<sequence>MGTARFLSAVLLLSVLLMVTFPALLSAEYHDGRVDICSLPSDSGDCLRFFEMWYFDGTTCTKFVYGGCGGNDNRFPTEKACMKRCAKA</sequence>
<feature type="signal peptide" evidence="3">
    <location>
        <begin position="1"/>
        <end position="27"/>
    </location>
</feature>
<feature type="propeptide" id="PRO_0000429347" evidence="1">
    <location>
        <begin position="28"/>
        <end position="33"/>
    </location>
</feature>
<feature type="chain" id="PRO_0000429348" description="Kunitz-type U15-theraphotoxin-Hs1g">
    <location>
        <begin position="34"/>
        <end position="88"/>
    </location>
</feature>
<feature type="domain" description="BPTI/Kunitz inhibitor" evidence="4">
    <location>
        <begin position="37"/>
        <end position="85"/>
    </location>
</feature>
<feature type="disulfide bond" evidence="4">
    <location>
        <begin position="37"/>
        <end position="85"/>
    </location>
</feature>
<feature type="disulfide bond" evidence="4">
    <location>
        <begin position="46"/>
        <end position="68"/>
    </location>
</feature>
<feature type="disulfide bond" evidence="4">
    <location>
        <begin position="60"/>
        <end position="81"/>
    </location>
</feature>
<proteinExistence type="inferred from homology"/>
<protein>
    <recommendedName>
        <fullName>Kunitz-type U15-theraphotoxin-Hs1g</fullName>
        <shortName>U15-TRTX-Hs1g</shortName>
    </recommendedName>
    <alternativeName>
        <fullName evidence="6">Huwentoxin HW11c39</fullName>
    </alternativeName>
</protein>
<name>VKT39_CYRSC</name>
<comment type="function">
    <text evidence="2">Serine protease inhibitor that inhibits trypsin at a molar ratio of 1:1.</text>
</comment>
<comment type="subcellular location">
    <subcellularLocation>
        <location evidence="8">Secreted</location>
    </subcellularLocation>
</comment>
<comment type="tissue specificity">
    <text evidence="8">Expressed by the venom gland.</text>
</comment>
<comment type="miscellaneous">
    <text evidence="5">Negative results: the recombinant protein does not show activity on Kv1.1/KCNA1, Kv1.2/KCNA2, Kv1.3/KCNA3, Kv2.1/KCNB1 and Kv4.3/KCND3 channels, as well as calcium (Cav) and sodium channels (Nav). It also does not show detectable activity against chymotrypsin, trypsin kallikrein, and thrombin.</text>
</comment>
<comment type="similarity">
    <text evidence="7">Belongs to the venom Kunitz-type family. 03 (sub-Kunitz) subfamily.</text>
</comment>
<dbReference type="EMBL" id="KF160307">
    <property type="protein sequence ID" value="AHY30318.1"/>
    <property type="molecule type" value="Genomic_DNA"/>
</dbReference>
<dbReference type="SMR" id="P0DMJ1"/>
<dbReference type="ArachnoServer" id="AS001773">
    <property type="toxin name" value="U15-theraphotoxin-Hs1g"/>
</dbReference>
<dbReference type="GO" id="GO:0005615">
    <property type="term" value="C:extracellular space"/>
    <property type="evidence" value="ECO:0007669"/>
    <property type="project" value="TreeGrafter"/>
</dbReference>
<dbReference type="GO" id="GO:0015459">
    <property type="term" value="F:potassium channel regulator activity"/>
    <property type="evidence" value="ECO:0007669"/>
    <property type="project" value="UniProtKB-KW"/>
</dbReference>
<dbReference type="GO" id="GO:0004867">
    <property type="term" value="F:serine-type endopeptidase inhibitor activity"/>
    <property type="evidence" value="ECO:0007669"/>
    <property type="project" value="UniProtKB-KW"/>
</dbReference>
<dbReference type="GO" id="GO:0090729">
    <property type="term" value="F:toxin activity"/>
    <property type="evidence" value="ECO:0007669"/>
    <property type="project" value="UniProtKB-KW"/>
</dbReference>
<dbReference type="GO" id="GO:0044562">
    <property type="term" value="P:envenomation resulting in negative regulation of voltage-gated potassium channel activity in another organism"/>
    <property type="evidence" value="ECO:0007669"/>
    <property type="project" value="UniProtKB-ARBA"/>
</dbReference>
<dbReference type="CDD" id="cd22598">
    <property type="entry name" value="Kunitz_huwentoxin"/>
    <property type="match status" value="1"/>
</dbReference>
<dbReference type="FunFam" id="4.10.410.10:FF:000020">
    <property type="entry name" value="Collagen, type VI, alpha 3"/>
    <property type="match status" value="1"/>
</dbReference>
<dbReference type="Gene3D" id="4.10.410.10">
    <property type="entry name" value="Pancreatic trypsin inhibitor Kunitz domain"/>
    <property type="match status" value="1"/>
</dbReference>
<dbReference type="InterPro" id="IPR002223">
    <property type="entry name" value="Kunitz_BPTI"/>
</dbReference>
<dbReference type="InterPro" id="IPR036880">
    <property type="entry name" value="Kunitz_BPTI_sf"/>
</dbReference>
<dbReference type="InterPro" id="IPR020901">
    <property type="entry name" value="Prtase_inh_Kunz-CS"/>
</dbReference>
<dbReference type="InterPro" id="IPR050098">
    <property type="entry name" value="TFPI/VKTCI-like"/>
</dbReference>
<dbReference type="PANTHER" id="PTHR10083">
    <property type="entry name" value="KUNITZ-TYPE PROTEASE INHIBITOR-RELATED"/>
    <property type="match status" value="1"/>
</dbReference>
<dbReference type="PANTHER" id="PTHR10083:SF328">
    <property type="entry name" value="TISSUE FACTOR PATHWAY INHIBITOR"/>
    <property type="match status" value="1"/>
</dbReference>
<dbReference type="Pfam" id="PF00014">
    <property type="entry name" value="Kunitz_BPTI"/>
    <property type="match status" value="1"/>
</dbReference>
<dbReference type="PRINTS" id="PR00759">
    <property type="entry name" value="BASICPTASE"/>
</dbReference>
<dbReference type="SMART" id="SM00131">
    <property type="entry name" value="KU"/>
    <property type="match status" value="1"/>
</dbReference>
<dbReference type="SUPFAM" id="SSF57362">
    <property type="entry name" value="BPTI-like"/>
    <property type="match status" value="1"/>
</dbReference>
<dbReference type="PROSITE" id="PS00280">
    <property type="entry name" value="BPTI_KUNITZ_1"/>
    <property type="match status" value="1"/>
</dbReference>
<dbReference type="PROSITE" id="PS50279">
    <property type="entry name" value="BPTI_KUNITZ_2"/>
    <property type="match status" value="1"/>
</dbReference>
<evidence type="ECO:0000250" key="1"/>
<evidence type="ECO:0000250" key="2">
    <source>
        <dbReference type="UniProtKB" id="P68425"/>
    </source>
</evidence>
<evidence type="ECO:0000255" key="3"/>
<evidence type="ECO:0000255" key="4">
    <source>
        <dbReference type="PROSITE-ProRule" id="PRU00031"/>
    </source>
</evidence>
<evidence type="ECO:0000269" key="5">
    <source>
    </source>
</evidence>
<evidence type="ECO:0000303" key="6">
    <source>
    </source>
</evidence>
<evidence type="ECO:0000305" key="7"/>
<evidence type="ECO:0000305" key="8">
    <source>
    </source>
</evidence>
<keyword id="KW-1015">Disulfide bond</keyword>
<keyword id="KW-0646">Protease inhibitor</keyword>
<keyword id="KW-0964">Secreted</keyword>
<keyword id="KW-0722">Serine protease inhibitor</keyword>
<keyword id="KW-0732">Signal</keyword>
<organism>
    <name type="scientific">Cyriopagopus schmidti</name>
    <name type="common">Chinese bird spider</name>
    <name type="synonym">Haplopelma schmidti</name>
    <dbReference type="NCBI Taxonomy" id="29017"/>
    <lineage>
        <taxon>Eukaryota</taxon>
        <taxon>Metazoa</taxon>
        <taxon>Ecdysozoa</taxon>
        <taxon>Arthropoda</taxon>
        <taxon>Chelicerata</taxon>
        <taxon>Arachnida</taxon>
        <taxon>Araneae</taxon>
        <taxon>Mygalomorphae</taxon>
        <taxon>Theraphosidae</taxon>
        <taxon>Cyriopagopus</taxon>
    </lineage>
</organism>
<reference key="1">
    <citation type="journal article" date="2014" name="Peptides">
        <title>Molecular cloning, bioinformatics analysis and functional characterization of HWTX-XI toxin superfamily from the spider Ornithoctonus huwena.</title>
        <authorList>
            <person name="Jiang L."/>
            <person name="Deng M."/>
            <person name="Duan Z."/>
            <person name="Tang X."/>
            <person name="Liang S."/>
        </authorList>
    </citation>
    <scope>NUCLEOTIDE SEQUENCE [GENOMIC DNA]</scope>
    <scope>RECOMBINANT EXPRESSION</scope>
    <source>
        <tissue>Venom gland</tissue>
    </source>
</reference>